<organism>
    <name type="scientific">Anopheles gambiae</name>
    <name type="common">African malaria mosquito</name>
    <dbReference type="NCBI Taxonomy" id="7165"/>
    <lineage>
        <taxon>Eukaryota</taxon>
        <taxon>Metazoa</taxon>
        <taxon>Ecdysozoa</taxon>
        <taxon>Arthropoda</taxon>
        <taxon>Hexapoda</taxon>
        <taxon>Insecta</taxon>
        <taxon>Pterygota</taxon>
        <taxon>Neoptera</taxon>
        <taxon>Endopterygota</taxon>
        <taxon>Diptera</taxon>
        <taxon>Nematocera</taxon>
        <taxon>Culicoidea</taxon>
        <taxon>Culicidae</taxon>
        <taxon>Anophelinae</taxon>
        <taxon>Anopheles</taxon>
    </lineage>
</organism>
<protein>
    <recommendedName>
        <fullName evidence="2">Large ribosomal subunit protein eL15</fullName>
    </recommendedName>
    <alternativeName>
        <fullName>60S ribosomal protein L15</fullName>
    </alternativeName>
    <alternativeName>
        <fullName>RL10</fullName>
    </alternativeName>
</protein>
<accession>P52818</accession>
<accession>Q5TRZ1</accession>
<accession>Q7Q804</accession>
<sequence length="204" mass="24224">MGAYRYVQELYRKKQSDVMRYLLRIRVWQYRQMTRFHRAPRPSRPDKARRLGYKAKQGFSIFRIRVRRGGRKRPVPKGCTYGKPKSHGVNQLKPYRCLQSVAEERVGRRLGGLRVLNSYWVAQDAAHKYFEVIMVDPAHNAIRRDPNVNWICNAVHKHRELRGLTSAGKSSRGLGKGYRYSQTIGGSRRACWRRRNRLHLRRYR</sequence>
<gene>
    <name type="primary">RpL15</name>
    <name type="ORF">AGAP004919</name>
</gene>
<name>RL15_ANOGA</name>
<reference key="1">
    <citation type="submission" date="1996-03" db="EMBL/GenBank/DDBJ databases">
        <authorList>
            <person name="Dimopoulos G.M."/>
            <person name="Richman A."/>
            <person name="della Torre A."/>
            <person name="Rubio J."/>
            <person name="Kafatos F.C."/>
            <person name="Louis C."/>
        </authorList>
    </citation>
    <scope>NUCLEOTIDE SEQUENCE [MRNA]</scope>
    <source>
        <strain>G3</strain>
        <tissue>Midgut</tissue>
    </source>
</reference>
<reference key="2">
    <citation type="journal article" date="2002" name="Science">
        <title>The genome sequence of the malaria mosquito Anopheles gambiae.</title>
        <authorList>
            <person name="Holt R.A."/>
            <person name="Subramanian G.M."/>
            <person name="Halpern A."/>
            <person name="Sutton G.G."/>
            <person name="Charlab R."/>
            <person name="Nusskern D.R."/>
            <person name="Wincker P."/>
            <person name="Clark A.G."/>
            <person name="Ribeiro J.M.C."/>
            <person name="Wides R."/>
            <person name="Salzberg S.L."/>
            <person name="Loftus B.J."/>
            <person name="Yandell M.D."/>
            <person name="Majoros W.H."/>
            <person name="Rusch D.B."/>
            <person name="Lai Z."/>
            <person name="Kraft C.L."/>
            <person name="Abril J.F."/>
            <person name="Anthouard V."/>
            <person name="Arensburger P."/>
            <person name="Atkinson P.W."/>
            <person name="Baden H."/>
            <person name="de Berardinis V."/>
            <person name="Baldwin D."/>
            <person name="Benes V."/>
            <person name="Biedler J."/>
            <person name="Blass C."/>
            <person name="Bolanos R."/>
            <person name="Boscus D."/>
            <person name="Barnstead M."/>
            <person name="Cai S."/>
            <person name="Center A."/>
            <person name="Chaturverdi K."/>
            <person name="Christophides G.K."/>
            <person name="Chrystal M.A.M."/>
            <person name="Clamp M."/>
            <person name="Cravchik A."/>
            <person name="Curwen V."/>
            <person name="Dana A."/>
            <person name="Delcher A."/>
            <person name="Dew I."/>
            <person name="Evans C.A."/>
            <person name="Flanigan M."/>
            <person name="Grundschober-Freimoser A."/>
            <person name="Friedli L."/>
            <person name="Gu Z."/>
            <person name="Guan P."/>
            <person name="Guigo R."/>
            <person name="Hillenmeyer M.E."/>
            <person name="Hladun S.L."/>
            <person name="Hogan J.R."/>
            <person name="Hong Y.S."/>
            <person name="Hoover J."/>
            <person name="Jaillon O."/>
            <person name="Ke Z."/>
            <person name="Kodira C.D."/>
            <person name="Kokoza E."/>
            <person name="Koutsos A."/>
            <person name="Letunic I."/>
            <person name="Levitsky A.A."/>
            <person name="Liang Y."/>
            <person name="Lin J.-J."/>
            <person name="Lobo N.F."/>
            <person name="Lopez J.R."/>
            <person name="Malek J.A."/>
            <person name="McIntosh T.C."/>
            <person name="Meister S."/>
            <person name="Miller J.R."/>
            <person name="Mobarry C."/>
            <person name="Mongin E."/>
            <person name="Murphy S.D."/>
            <person name="O'Brochta D.A."/>
            <person name="Pfannkoch C."/>
            <person name="Qi R."/>
            <person name="Regier M.A."/>
            <person name="Remington K."/>
            <person name="Shao H."/>
            <person name="Sharakhova M.V."/>
            <person name="Sitter C.D."/>
            <person name="Shetty J."/>
            <person name="Smith T.J."/>
            <person name="Strong R."/>
            <person name="Sun J."/>
            <person name="Thomasova D."/>
            <person name="Ton L.Q."/>
            <person name="Topalis P."/>
            <person name="Tu Z.J."/>
            <person name="Unger M.F."/>
            <person name="Walenz B."/>
            <person name="Wang A.H."/>
            <person name="Wang J."/>
            <person name="Wang M."/>
            <person name="Wang X."/>
            <person name="Woodford K.J."/>
            <person name="Wortman J.R."/>
            <person name="Wu M."/>
            <person name="Yao A."/>
            <person name="Zdobnov E.M."/>
            <person name="Zhang H."/>
            <person name="Zhao Q."/>
            <person name="Zhao S."/>
            <person name="Zhu S.C."/>
            <person name="Zhimulev I."/>
            <person name="Coluzzi M."/>
            <person name="della Torre A."/>
            <person name="Roth C.W."/>
            <person name="Louis C."/>
            <person name="Kalush F."/>
            <person name="Mural R.J."/>
            <person name="Myers E.W."/>
            <person name="Adams M.D."/>
            <person name="Smith H.O."/>
            <person name="Broder S."/>
            <person name="Gardner M.J."/>
            <person name="Fraser C.M."/>
            <person name="Birney E."/>
            <person name="Bork P."/>
            <person name="Brey P.T."/>
            <person name="Venter J.C."/>
            <person name="Weissenbach J."/>
            <person name="Kafatos F.C."/>
            <person name="Collins F.H."/>
            <person name="Hoffman S.L."/>
        </authorList>
    </citation>
    <scope>NUCLEOTIDE SEQUENCE [LARGE SCALE GENOMIC DNA]</scope>
    <source>
        <strain>PEST</strain>
    </source>
</reference>
<feature type="initiator methionine" description="Removed" evidence="1">
    <location>
        <position position="1"/>
    </location>
</feature>
<feature type="chain" id="PRO_0000127553" description="Large ribosomal subunit protein eL15">
    <location>
        <begin position="2"/>
        <end position="204"/>
    </location>
</feature>
<feature type="sequence conflict" description="In Ref. 1; CAA93816." evidence="2" ref="1">
    <original>IRV</original>
    <variation>VRA</variation>
    <location>
        <begin position="25"/>
        <end position="27"/>
    </location>
</feature>
<feature type="sequence conflict" description="In Ref. 1; CAA93816." evidence="2" ref="1">
    <original>SRPDKA</original>
    <variation>WRPTRL</variation>
    <location>
        <begin position="43"/>
        <end position="48"/>
    </location>
</feature>
<feature type="sequence conflict" description="In Ref. 1; CAA93816." evidence="2" ref="1">
    <original>Q</original>
    <variation>T</variation>
    <location>
        <position position="57"/>
    </location>
</feature>
<feature type="sequence conflict" description="In Ref. 1; CAA93816." evidence="2" ref="1">
    <original>R</original>
    <variation>C</variation>
    <location>
        <position position="68"/>
    </location>
</feature>
<feature type="sequence conflict" description="In Ref. 1; CAA93816." evidence="2" ref="1">
    <original>P</original>
    <variation>H</variation>
    <location>
        <position position="76"/>
    </location>
</feature>
<feature type="sequence conflict" description="In Ref. 1; CAA93816." evidence="2" ref="1">
    <original>R</original>
    <variation>G</variation>
    <location>
        <position position="108"/>
    </location>
</feature>
<feature type="sequence conflict" description="In Ref. 1; CAA93816." evidence="2" ref="1">
    <original>AH</original>
    <variation>PN</variation>
    <location>
        <begin position="138"/>
        <end position="139"/>
    </location>
</feature>
<feature type="sequence conflict" description="In Ref. 1; CAA93816." evidence="2" ref="1">
    <original>G</original>
    <variation>A</variation>
    <location>
        <position position="177"/>
    </location>
</feature>
<feature type="sequence conflict" description="In Ref. 1; CAA93816." evidence="2" ref="1">
    <original>CWR</original>
    <variation>AGV</variation>
    <location>
        <begin position="191"/>
        <end position="193"/>
    </location>
</feature>
<evidence type="ECO:0000250" key="1"/>
<evidence type="ECO:0000305" key="2"/>
<comment type="similarity">
    <text evidence="2">Belongs to the eukaryotic ribosomal protein eL15 family.</text>
</comment>
<keyword id="KW-1185">Reference proteome</keyword>
<keyword id="KW-0687">Ribonucleoprotein</keyword>
<keyword id="KW-0689">Ribosomal protein</keyword>
<proteinExistence type="evidence at transcript level"/>
<dbReference type="EMBL" id="Z69976">
    <property type="protein sequence ID" value="CAA93816.1"/>
    <property type="molecule type" value="mRNA"/>
</dbReference>
<dbReference type="EMBL" id="AAAB01008948">
    <property type="protein sequence ID" value="EAA10485.3"/>
    <property type="molecule type" value="Genomic_DNA"/>
</dbReference>
<dbReference type="SMR" id="P52818"/>
<dbReference type="FunCoup" id="P52818">
    <property type="interactions" value="1723"/>
</dbReference>
<dbReference type="STRING" id="7165.P52818"/>
<dbReference type="PaxDb" id="7165-AGAP004919-PA"/>
<dbReference type="EnsemblMetazoa" id="AGAP004919-RA">
    <property type="protein sequence ID" value="AGAP004919-PA"/>
    <property type="gene ID" value="AGAP004919"/>
</dbReference>
<dbReference type="GeneID" id="1275723"/>
<dbReference type="KEGG" id="aga:1275723"/>
<dbReference type="CTD" id="6138"/>
<dbReference type="VEuPathDB" id="VectorBase:AGAMI1_006911"/>
<dbReference type="VEuPathDB" id="VectorBase:AGAP004919"/>
<dbReference type="eggNOG" id="KOG1678">
    <property type="taxonomic scope" value="Eukaryota"/>
</dbReference>
<dbReference type="HOGENOM" id="CLU_080796_0_0_1"/>
<dbReference type="InParanoid" id="P52818"/>
<dbReference type="OMA" id="YIRDAWK"/>
<dbReference type="OrthoDB" id="10255148at2759"/>
<dbReference type="PhylomeDB" id="P52818"/>
<dbReference type="Proteomes" id="UP000007062">
    <property type="component" value="Chromosome 2L"/>
</dbReference>
<dbReference type="GO" id="GO:0022625">
    <property type="term" value="C:cytosolic large ribosomal subunit"/>
    <property type="evidence" value="ECO:0000318"/>
    <property type="project" value="GO_Central"/>
</dbReference>
<dbReference type="GO" id="GO:0003723">
    <property type="term" value="F:RNA binding"/>
    <property type="evidence" value="ECO:0000318"/>
    <property type="project" value="GO_Central"/>
</dbReference>
<dbReference type="GO" id="GO:0003735">
    <property type="term" value="F:structural constituent of ribosome"/>
    <property type="evidence" value="ECO:0000318"/>
    <property type="project" value="GO_Central"/>
</dbReference>
<dbReference type="GO" id="GO:0002181">
    <property type="term" value="P:cytoplasmic translation"/>
    <property type="evidence" value="ECO:0000318"/>
    <property type="project" value="GO_Central"/>
</dbReference>
<dbReference type="FunFam" id="3.40.1120.10:FF:000001">
    <property type="entry name" value="Ribosomal protein L15"/>
    <property type="match status" value="1"/>
</dbReference>
<dbReference type="Gene3D" id="3.40.1120.10">
    <property type="entry name" value="Ribosomal protein l15e"/>
    <property type="match status" value="1"/>
</dbReference>
<dbReference type="InterPro" id="IPR024794">
    <property type="entry name" value="Rbsml_eL15_core_dom_sf"/>
</dbReference>
<dbReference type="InterPro" id="IPR000439">
    <property type="entry name" value="Ribosomal_eL15"/>
</dbReference>
<dbReference type="InterPro" id="IPR020925">
    <property type="entry name" value="Ribosomal_eL15_CS"/>
</dbReference>
<dbReference type="InterPro" id="IPR012678">
    <property type="entry name" value="Ribosomal_uL23/eL15/eS24_sf"/>
</dbReference>
<dbReference type="NCBIfam" id="NF003269">
    <property type="entry name" value="PRK04243.1"/>
    <property type="match status" value="1"/>
</dbReference>
<dbReference type="PANTHER" id="PTHR11847:SF4">
    <property type="entry name" value="LARGE RIBOSOMAL SUBUNIT PROTEIN EL15"/>
    <property type="match status" value="1"/>
</dbReference>
<dbReference type="PANTHER" id="PTHR11847">
    <property type="entry name" value="RIBOSOMAL PROTEIN L15"/>
    <property type="match status" value="1"/>
</dbReference>
<dbReference type="Pfam" id="PF00827">
    <property type="entry name" value="Ribosomal_L15e"/>
    <property type="match status" value="1"/>
</dbReference>
<dbReference type="SMART" id="SM01384">
    <property type="entry name" value="Ribosomal_L15e"/>
    <property type="match status" value="1"/>
</dbReference>
<dbReference type="SUPFAM" id="SSF54189">
    <property type="entry name" value="Ribosomal proteins S24e, L23 and L15e"/>
    <property type="match status" value="1"/>
</dbReference>
<dbReference type="PROSITE" id="PS01194">
    <property type="entry name" value="RIBOSOMAL_L15E"/>
    <property type="match status" value="1"/>
</dbReference>